<dbReference type="EC" id="3.6.1.23" evidence="1"/>
<dbReference type="EMBL" id="AE002160">
    <property type="protein sequence ID" value="AAF39402.1"/>
    <property type="status" value="ALT_INIT"/>
    <property type="molecule type" value="Genomic_DNA"/>
</dbReference>
<dbReference type="PIR" id="G81687">
    <property type="entry name" value="G81687"/>
</dbReference>
<dbReference type="RefSeq" id="WP_010230843.1">
    <property type="nucleotide sequence ID" value="NZ_CP063055.1"/>
</dbReference>
<dbReference type="SMR" id="Q9PKA2"/>
<dbReference type="GeneID" id="1245924"/>
<dbReference type="KEGG" id="cmu:TC_0565"/>
<dbReference type="eggNOG" id="COG0756">
    <property type="taxonomic scope" value="Bacteria"/>
</dbReference>
<dbReference type="HOGENOM" id="CLU_068508_1_2_0"/>
<dbReference type="OrthoDB" id="9809956at2"/>
<dbReference type="UniPathway" id="UPA00610">
    <property type="reaction ID" value="UER00666"/>
</dbReference>
<dbReference type="Proteomes" id="UP000000800">
    <property type="component" value="Chromosome"/>
</dbReference>
<dbReference type="GO" id="GO:0004170">
    <property type="term" value="F:dUTP diphosphatase activity"/>
    <property type="evidence" value="ECO:0007669"/>
    <property type="project" value="UniProtKB-UniRule"/>
</dbReference>
<dbReference type="GO" id="GO:0000287">
    <property type="term" value="F:magnesium ion binding"/>
    <property type="evidence" value="ECO:0007669"/>
    <property type="project" value="UniProtKB-UniRule"/>
</dbReference>
<dbReference type="GO" id="GO:0006226">
    <property type="term" value="P:dUMP biosynthetic process"/>
    <property type="evidence" value="ECO:0007669"/>
    <property type="project" value="UniProtKB-UniRule"/>
</dbReference>
<dbReference type="GO" id="GO:0046081">
    <property type="term" value="P:dUTP catabolic process"/>
    <property type="evidence" value="ECO:0007669"/>
    <property type="project" value="InterPro"/>
</dbReference>
<dbReference type="CDD" id="cd07557">
    <property type="entry name" value="trimeric_dUTPase"/>
    <property type="match status" value="1"/>
</dbReference>
<dbReference type="FunFam" id="2.70.40.10:FF:000008">
    <property type="entry name" value="Deoxyuridine 5'-triphosphate nucleotidohydrolase"/>
    <property type="match status" value="1"/>
</dbReference>
<dbReference type="Gene3D" id="2.70.40.10">
    <property type="match status" value="1"/>
</dbReference>
<dbReference type="HAMAP" id="MF_00116">
    <property type="entry name" value="dUTPase_bact"/>
    <property type="match status" value="1"/>
</dbReference>
<dbReference type="InterPro" id="IPR008181">
    <property type="entry name" value="dUTPase"/>
</dbReference>
<dbReference type="InterPro" id="IPR029054">
    <property type="entry name" value="dUTPase-like"/>
</dbReference>
<dbReference type="InterPro" id="IPR036157">
    <property type="entry name" value="dUTPase-like_sf"/>
</dbReference>
<dbReference type="InterPro" id="IPR033704">
    <property type="entry name" value="dUTPase_trimeric"/>
</dbReference>
<dbReference type="NCBIfam" id="TIGR00576">
    <property type="entry name" value="dut"/>
    <property type="match status" value="1"/>
</dbReference>
<dbReference type="NCBIfam" id="NF001862">
    <property type="entry name" value="PRK00601.1"/>
    <property type="match status" value="1"/>
</dbReference>
<dbReference type="PANTHER" id="PTHR11241">
    <property type="entry name" value="DEOXYURIDINE 5'-TRIPHOSPHATE NUCLEOTIDOHYDROLASE"/>
    <property type="match status" value="1"/>
</dbReference>
<dbReference type="PANTHER" id="PTHR11241:SF0">
    <property type="entry name" value="DEOXYURIDINE 5'-TRIPHOSPHATE NUCLEOTIDOHYDROLASE"/>
    <property type="match status" value="1"/>
</dbReference>
<dbReference type="Pfam" id="PF00692">
    <property type="entry name" value="dUTPase"/>
    <property type="match status" value="1"/>
</dbReference>
<dbReference type="SUPFAM" id="SSF51283">
    <property type="entry name" value="dUTPase-like"/>
    <property type="match status" value="1"/>
</dbReference>
<keyword id="KW-0378">Hydrolase</keyword>
<keyword id="KW-0460">Magnesium</keyword>
<keyword id="KW-0479">Metal-binding</keyword>
<keyword id="KW-0546">Nucleotide metabolism</keyword>
<organism>
    <name type="scientific">Chlamydia muridarum (strain MoPn / Nigg)</name>
    <dbReference type="NCBI Taxonomy" id="243161"/>
    <lineage>
        <taxon>Bacteria</taxon>
        <taxon>Pseudomonadati</taxon>
        <taxon>Chlamydiota</taxon>
        <taxon>Chlamydiia</taxon>
        <taxon>Chlamydiales</taxon>
        <taxon>Chlamydiaceae</taxon>
        <taxon>Chlamydia/Chlamydophila group</taxon>
        <taxon>Chlamydia</taxon>
    </lineage>
</organism>
<protein>
    <recommendedName>
        <fullName evidence="1">Deoxyuridine 5'-triphosphate nucleotidohydrolase</fullName>
        <shortName evidence="1">dUTPase</shortName>
        <ecNumber evidence="1">3.6.1.23</ecNumber>
    </recommendedName>
    <alternativeName>
        <fullName evidence="1">dUTP pyrophosphatase</fullName>
    </alternativeName>
</protein>
<comment type="function">
    <text evidence="1">This enzyme is involved in nucleotide metabolism: it produces dUMP, the immediate precursor of thymidine nucleotides and it decreases the intracellular concentration of dUTP so that uracil cannot be incorporated into DNA.</text>
</comment>
<comment type="catalytic activity">
    <reaction evidence="1">
        <text>dUTP + H2O = dUMP + diphosphate + H(+)</text>
        <dbReference type="Rhea" id="RHEA:10248"/>
        <dbReference type="ChEBI" id="CHEBI:15377"/>
        <dbReference type="ChEBI" id="CHEBI:15378"/>
        <dbReference type="ChEBI" id="CHEBI:33019"/>
        <dbReference type="ChEBI" id="CHEBI:61555"/>
        <dbReference type="ChEBI" id="CHEBI:246422"/>
        <dbReference type="EC" id="3.6.1.23"/>
    </reaction>
</comment>
<comment type="cofactor">
    <cofactor evidence="1">
        <name>Mg(2+)</name>
        <dbReference type="ChEBI" id="CHEBI:18420"/>
    </cofactor>
</comment>
<comment type="pathway">
    <text evidence="1">Pyrimidine metabolism; dUMP biosynthesis; dUMP from dCTP (dUTP route): step 2/2.</text>
</comment>
<comment type="similarity">
    <text evidence="1">Belongs to the dUTPase family.</text>
</comment>
<comment type="sequence caution" evidence="2">
    <conflict type="erroneous initiation">
        <sequence resource="EMBL-CDS" id="AAF39402"/>
    </conflict>
</comment>
<evidence type="ECO:0000255" key="1">
    <source>
        <dbReference type="HAMAP-Rule" id="MF_00116"/>
    </source>
</evidence>
<evidence type="ECO:0000305" key="2"/>
<name>DUT_CHLMU</name>
<accession>Q9PKA2</accession>
<proteinExistence type="inferred from homology"/>
<reference key="1">
    <citation type="journal article" date="2000" name="Nucleic Acids Res.">
        <title>Genome sequences of Chlamydia trachomatis MoPn and Chlamydia pneumoniae AR39.</title>
        <authorList>
            <person name="Read T.D."/>
            <person name="Brunham R.C."/>
            <person name="Shen C."/>
            <person name="Gill S.R."/>
            <person name="Heidelberg J.F."/>
            <person name="White O."/>
            <person name="Hickey E.K."/>
            <person name="Peterson J.D."/>
            <person name="Utterback T.R."/>
            <person name="Berry K.J."/>
            <person name="Bass S."/>
            <person name="Linher K.D."/>
            <person name="Weidman J.F."/>
            <person name="Khouri H.M."/>
            <person name="Craven B."/>
            <person name="Bowman C."/>
            <person name="Dodson R.J."/>
            <person name="Gwinn M.L."/>
            <person name="Nelson W.C."/>
            <person name="DeBoy R.T."/>
            <person name="Kolonay J.F."/>
            <person name="McClarty G."/>
            <person name="Salzberg S.L."/>
            <person name="Eisen J.A."/>
            <person name="Fraser C.M."/>
        </authorList>
    </citation>
    <scope>NUCLEOTIDE SEQUENCE [LARGE SCALE GENOMIC DNA]</scope>
    <source>
        <strain>MoPn / Nigg</strain>
    </source>
</reference>
<gene>
    <name evidence="1" type="primary">dut</name>
    <name type="ordered locus">TC_0565</name>
</gene>
<sequence length="145" mass="15324">MKFFCKLESGSSLPEYATSGASGADVRANISEPIAILPGQRALIPTGISVDIPHGYEIQVRSRSGLAVKYGVIVLQSPGTVDADYRGEIRVILANLGESTFIVEPGMRIAQLVVAKVEQVSFVETQEELTATARGTGGFGHTGEC</sequence>
<feature type="chain" id="PRO_0000182845" description="Deoxyuridine 5'-triphosphate nucleotidohydrolase">
    <location>
        <begin position="1"/>
        <end position="145"/>
    </location>
</feature>
<feature type="binding site" evidence="1">
    <location>
        <begin position="63"/>
        <end position="65"/>
    </location>
    <ligand>
        <name>substrate</name>
    </ligand>
</feature>
<feature type="binding site" evidence="1">
    <location>
        <position position="76"/>
    </location>
    <ligand>
        <name>substrate</name>
    </ligand>
</feature>
<feature type="binding site" evidence="1">
    <location>
        <begin position="80"/>
        <end position="82"/>
    </location>
    <ligand>
        <name>substrate</name>
    </ligand>
</feature>